<keyword id="KW-1185">Reference proteome</keyword>
<keyword id="KW-0687">Ribonucleoprotein</keyword>
<keyword id="KW-0689">Ribosomal protein</keyword>
<evidence type="ECO:0000255" key="1">
    <source>
        <dbReference type="HAMAP-Rule" id="MF_01368"/>
    </source>
</evidence>
<evidence type="ECO:0000305" key="2"/>
<gene>
    <name evidence="1" type="primary">rplQ</name>
    <name type="ordered locus">Cj1596</name>
</gene>
<reference key="1">
    <citation type="journal article" date="2000" name="Nature">
        <title>The genome sequence of the food-borne pathogen Campylobacter jejuni reveals hypervariable sequences.</title>
        <authorList>
            <person name="Parkhill J."/>
            <person name="Wren B.W."/>
            <person name="Mungall K.L."/>
            <person name="Ketley J.M."/>
            <person name="Churcher C.M."/>
            <person name="Basham D."/>
            <person name="Chillingworth T."/>
            <person name="Davies R.M."/>
            <person name="Feltwell T."/>
            <person name="Holroyd S."/>
            <person name="Jagels K."/>
            <person name="Karlyshev A.V."/>
            <person name="Moule S."/>
            <person name="Pallen M.J."/>
            <person name="Penn C.W."/>
            <person name="Quail M.A."/>
            <person name="Rajandream M.A."/>
            <person name="Rutherford K.M."/>
            <person name="van Vliet A.H.M."/>
            <person name="Whitehead S."/>
            <person name="Barrell B.G."/>
        </authorList>
    </citation>
    <scope>NUCLEOTIDE SEQUENCE [LARGE SCALE GENOMIC DNA]</scope>
    <source>
        <strain>ATCC 700819 / NCTC 11168</strain>
    </source>
</reference>
<protein>
    <recommendedName>
        <fullName evidence="1">Large ribosomal subunit protein bL17</fullName>
    </recommendedName>
    <alternativeName>
        <fullName evidence="2">50S ribosomal protein L17</fullName>
    </alternativeName>
</protein>
<proteinExistence type="inferred from homology"/>
<sequence length="117" mass="13248">MRHKHGYRKLGRTSSHRAALLKNLTIALVNSGKIETTLPKAKELRGYVERLITRARLGDFNAHRAVFASLQDKNATNKLVTEIAPKFKDRNGGYTRIIKTRIRRGDAAEMAFIEFVA</sequence>
<comment type="subunit">
    <text evidence="1">Part of the 50S ribosomal subunit. Contacts protein L32.</text>
</comment>
<comment type="similarity">
    <text evidence="1">Belongs to the bacterial ribosomal protein bL17 family.</text>
</comment>
<dbReference type="EMBL" id="AL111168">
    <property type="protein sequence ID" value="CAL35693.1"/>
    <property type="molecule type" value="Genomic_DNA"/>
</dbReference>
<dbReference type="PIR" id="B81255">
    <property type="entry name" value="B81255"/>
</dbReference>
<dbReference type="RefSeq" id="WP_002851332.1">
    <property type="nucleotide sequence ID" value="NZ_SZUC01000002.1"/>
</dbReference>
<dbReference type="RefSeq" id="YP_002344965.1">
    <property type="nucleotide sequence ID" value="NC_002163.1"/>
</dbReference>
<dbReference type="SMR" id="Q0P832"/>
<dbReference type="IntAct" id="Q0P832">
    <property type="interactions" value="1"/>
</dbReference>
<dbReference type="STRING" id="192222.Cj1596"/>
<dbReference type="PaxDb" id="192222-Cj1596"/>
<dbReference type="EnsemblBacteria" id="CAL35693">
    <property type="protein sequence ID" value="CAL35693"/>
    <property type="gene ID" value="Cj1596"/>
</dbReference>
<dbReference type="GeneID" id="905866"/>
<dbReference type="KEGG" id="cje:Cj1596"/>
<dbReference type="PATRIC" id="fig|192222.6.peg.1572"/>
<dbReference type="eggNOG" id="COG0203">
    <property type="taxonomic scope" value="Bacteria"/>
</dbReference>
<dbReference type="HOGENOM" id="CLU_074407_2_0_7"/>
<dbReference type="OrthoDB" id="9809073at2"/>
<dbReference type="Proteomes" id="UP000000799">
    <property type="component" value="Chromosome"/>
</dbReference>
<dbReference type="GO" id="GO:0022625">
    <property type="term" value="C:cytosolic large ribosomal subunit"/>
    <property type="evidence" value="ECO:0007669"/>
    <property type="project" value="TreeGrafter"/>
</dbReference>
<dbReference type="GO" id="GO:0003735">
    <property type="term" value="F:structural constituent of ribosome"/>
    <property type="evidence" value="ECO:0007669"/>
    <property type="project" value="InterPro"/>
</dbReference>
<dbReference type="GO" id="GO:0006412">
    <property type="term" value="P:translation"/>
    <property type="evidence" value="ECO:0007669"/>
    <property type="project" value="UniProtKB-UniRule"/>
</dbReference>
<dbReference type="FunFam" id="3.90.1030.10:FF:000003">
    <property type="entry name" value="50S ribosomal protein L17"/>
    <property type="match status" value="1"/>
</dbReference>
<dbReference type="Gene3D" id="3.90.1030.10">
    <property type="entry name" value="Ribosomal protein L17"/>
    <property type="match status" value="1"/>
</dbReference>
<dbReference type="HAMAP" id="MF_01368">
    <property type="entry name" value="Ribosomal_bL17"/>
    <property type="match status" value="1"/>
</dbReference>
<dbReference type="InterPro" id="IPR000456">
    <property type="entry name" value="Ribosomal_bL17"/>
</dbReference>
<dbReference type="InterPro" id="IPR047859">
    <property type="entry name" value="Ribosomal_bL17_CS"/>
</dbReference>
<dbReference type="InterPro" id="IPR036373">
    <property type="entry name" value="Ribosomal_bL17_sf"/>
</dbReference>
<dbReference type="NCBIfam" id="TIGR00059">
    <property type="entry name" value="L17"/>
    <property type="match status" value="1"/>
</dbReference>
<dbReference type="PANTHER" id="PTHR14413:SF16">
    <property type="entry name" value="LARGE RIBOSOMAL SUBUNIT PROTEIN BL17M"/>
    <property type="match status" value="1"/>
</dbReference>
<dbReference type="PANTHER" id="PTHR14413">
    <property type="entry name" value="RIBOSOMAL PROTEIN L17"/>
    <property type="match status" value="1"/>
</dbReference>
<dbReference type="Pfam" id="PF01196">
    <property type="entry name" value="Ribosomal_L17"/>
    <property type="match status" value="1"/>
</dbReference>
<dbReference type="SUPFAM" id="SSF64263">
    <property type="entry name" value="Prokaryotic ribosomal protein L17"/>
    <property type="match status" value="1"/>
</dbReference>
<dbReference type="PROSITE" id="PS01167">
    <property type="entry name" value="RIBOSOMAL_L17"/>
    <property type="match status" value="1"/>
</dbReference>
<name>RL17_CAMJE</name>
<accession>Q0P832</accession>
<feature type="chain" id="PRO_0000267850" description="Large ribosomal subunit protein bL17">
    <location>
        <begin position="1"/>
        <end position="117"/>
    </location>
</feature>
<organism>
    <name type="scientific">Campylobacter jejuni subsp. jejuni serotype O:2 (strain ATCC 700819 / NCTC 11168)</name>
    <dbReference type="NCBI Taxonomy" id="192222"/>
    <lineage>
        <taxon>Bacteria</taxon>
        <taxon>Pseudomonadati</taxon>
        <taxon>Campylobacterota</taxon>
        <taxon>Epsilonproteobacteria</taxon>
        <taxon>Campylobacterales</taxon>
        <taxon>Campylobacteraceae</taxon>
        <taxon>Campylobacter</taxon>
    </lineage>
</organism>